<sequence length="870" mass="73330">MAGLTAAVPQPGVLLILLLNLLHPAQPGGVPGAVPGGVPGGLPGGVPGGVYYPGAGIGGGLGGGALGPGGKPPKPGAGLLGAFGAGPGGLGGAGPGAGLSYASRPGGVLVPGGGAGAAAAYKAAAKAGAGLGGIGGVPGGVGVGGVPGAVGVGGVPGAVGGIGGIGGLGVSTGAVVPQLGAGVGAGGKPGKVPGVGLPGVYPGGVLPGTGARFPGVGVLPGVPTGTGVKAKVPGGGGGAFSGIPGVGPFGGQQPGVPLGYPIKAPKLPGGYGLPYTNGKLPYGVAGAGGKAGYPTGTGVGSQAAVAAAKAAKYAGAGGGGVLPGVGGGGIPGGAGAIPGIGGITGAGTPAAAAAAKAAAKAAKYGAAGGLVPGGPGVRVPGAGIPGVGIPGVGGIPGVGGIPGVGGIPGVGGPGIGGPGIVGGPGAVSPAAAAKAAAKAAKYGARGGVGIPTYGVGAGGFPGYGVGAGAGLGGASQAAAAAAAAKAAKYGAGGAGTLGGLVPGAVPGALPGAVPGALPGAVPGALPGAVPGVPGTGGVPGAGTPAAAAAAAAAKAAAKAGQYGLGPGVGGVPGGVGVGGLPGGVGPGGVTGIGTGPGTGLVPGDLGGAGTPAAAKSAAKAAAKAQYRAAAGLGAGVPGLGVGAGVPGFGAGAGGFGAGAGVPGFGAGAVPGSLAASKAAKYGAAGGLGGPGGLGGPGGLGGPGGFGGPGGLGGVPGGVAGGAPAAAAAAKAAAKAAQYGLGGAGGLGAGGLGAGGLGAGGLGAGGLGAGGLGAGGVIPGAVGLGGVSPAAAAKAAKYGAAGLGGVLGARPFPGGGVAARPGFGLSPIYPGGGAGGLGVGGKPPKPYGGALGALGYQGGGCFGKSCGRKRK</sequence>
<evidence type="ECO:0000250" key="1"/>
<evidence type="ECO:0000250" key="2">
    <source>
        <dbReference type="UniProtKB" id="P04985"/>
    </source>
</evidence>
<evidence type="ECO:0000250" key="3">
    <source>
        <dbReference type="UniProtKB" id="P15502"/>
    </source>
</evidence>
<evidence type="ECO:0000250" key="4">
    <source>
        <dbReference type="UniProtKB" id="P54320"/>
    </source>
</evidence>
<evidence type="ECO:0000269" key="5">
    <source>
    </source>
</evidence>
<evidence type="ECO:0000269" key="6">
    <source>
    </source>
</evidence>
<evidence type="ECO:0000303" key="7">
    <source>
    </source>
</evidence>
<evidence type="ECO:0000305" key="8"/>
<protein>
    <recommendedName>
        <fullName>Elastin</fullName>
    </recommendedName>
    <alternativeName>
        <fullName>Tropoelastin</fullName>
    </alternativeName>
</protein>
<gene>
    <name type="primary">Eln</name>
</gene>
<dbReference type="EMBL" id="BC085910">
    <property type="protein sequence ID" value="AAH85910.1"/>
    <property type="molecule type" value="mRNA"/>
</dbReference>
<dbReference type="EMBL" id="M60647">
    <property type="protein sequence ID" value="AAA42269.1"/>
    <property type="molecule type" value="mRNA"/>
</dbReference>
<dbReference type="EMBL" id="M86372">
    <property type="protein sequence ID" value="AAA42271.1"/>
    <property type="molecule type" value="Genomic_DNA"/>
</dbReference>
<dbReference type="EMBL" id="M86355">
    <property type="protein sequence ID" value="AAA42271.1"/>
    <property type="status" value="JOINED"/>
    <property type="molecule type" value="Genomic_DNA"/>
</dbReference>
<dbReference type="EMBL" id="M86363">
    <property type="protein sequence ID" value="AAA42271.1"/>
    <property type="status" value="JOINED"/>
    <property type="molecule type" value="Genomic_DNA"/>
</dbReference>
<dbReference type="EMBL" id="M86364">
    <property type="protein sequence ID" value="AAA42271.1"/>
    <property type="status" value="JOINED"/>
    <property type="molecule type" value="Genomic_DNA"/>
</dbReference>
<dbReference type="EMBL" id="M86366">
    <property type="protein sequence ID" value="AAA42271.1"/>
    <property type="status" value="JOINED"/>
    <property type="molecule type" value="Genomic_DNA"/>
</dbReference>
<dbReference type="EMBL" id="M86371">
    <property type="protein sequence ID" value="AAA42271.1"/>
    <property type="status" value="JOINED"/>
    <property type="molecule type" value="Genomic_DNA"/>
</dbReference>
<dbReference type="EMBL" id="M86376">
    <property type="protein sequence ID" value="AAA42272.1"/>
    <property type="molecule type" value="Genomic_DNA"/>
</dbReference>
<dbReference type="EMBL" id="M86373">
    <property type="protein sequence ID" value="AAA42272.1"/>
    <property type="status" value="JOINED"/>
    <property type="molecule type" value="Genomic_DNA"/>
</dbReference>
<dbReference type="EMBL" id="M86375">
    <property type="protein sequence ID" value="AAA42272.1"/>
    <property type="status" value="JOINED"/>
    <property type="molecule type" value="Genomic_DNA"/>
</dbReference>
<dbReference type="EMBL" id="J04035">
    <property type="protein sequence ID" value="AAA42268.1"/>
    <property type="molecule type" value="mRNA"/>
</dbReference>
<dbReference type="PIR" id="A36106">
    <property type="entry name" value="EART"/>
</dbReference>
<dbReference type="RefSeq" id="NP_036854.1">
    <property type="nucleotide sequence ID" value="NM_012722.1"/>
</dbReference>
<dbReference type="FunCoup" id="Q99372">
    <property type="interactions" value="169"/>
</dbReference>
<dbReference type="STRING" id="10116.ENSRNOP00000045102"/>
<dbReference type="CarbonylDB" id="Q99372"/>
<dbReference type="GlyGen" id="Q99372">
    <property type="glycosylation" value="2 sites"/>
</dbReference>
<dbReference type="PhosphoSitePlus" id="Q99372"/>
<dbReference type="PaxDb" id="10116-ENSRNOP00000030301"/>
<dbReference type="DNASU" id="25043"/>
<dbReference type="GeneID" id="25043"/>
<dbReference type="KEGG" id="rno:25043"/>
<dbReference type="UCSC" id="RGD:67394">
    <molecule id="Q99372-1"/>
    <property type="organism name" value="rat"/>
</dbReference>
<dbReference type="AGR" id="RGD:67394"/>
<dbReference type="CTD" id="2006"/>
<dbReference type="RGD" id="67394">
    <property type="gene designation" value="Eln"/>
</dbReference>
<dbReference type="eggNOG" id="ENOG502RYNR">
    <property type="taxonomic scope" value="Eukaryota"/>
</dbReference>
<dbReference type="InParanoid" id="Q99372"/>
<dbReference type="TreeFam" id="TF338594"/>
<dbReference type="Reactome" id="R-RNO-1474228">
    <property type="pathway name" value="Degradation of the extracellular matrix"/>
</dbReference>
<dbReference type="Reactome" id="R-RNO-1566948">
    <property type="pathway name" value="Elastic fibre formation"/>
</dbReference>
<dbReference type="Reactome" id="R-RNO-2129379">
    <property type="pathway name" value="Molecules associated with elastic fibres"/>
</dbReference>
<dbReference type="PRO" id="PR:Q99372"/>
<dbReference type="Proteomes" id="UP000002494">
    <property type="component" value="Unplaced"/>
</dbReference>
<dbReference type="GO" id="GO:0071953">
    <property type="term" value="C:elastic fiber"/>
    <property type="evidence" value="ECO:0000266"/>
    <property type="project" value="RGD"/>
</dbReference>
<dbReference type="GO" id="GO:0005576">
    <property type="term" value="C:extracellular region"/>
    <property type="evidence" value="ECO:0000314"/>
    <property type="project" value="RGD"/>
</dbReference>
<dbReference type="GO" id="GO:0005615">
    <property type="term" value="C:extracellular space"/>
    <property type="evidence" value="ECO:0000314"/>
    <property type="project" value="RGD"/>
</dbReference>
<dbReference type="GO" id="GO:0050840">
    <property type="term" value="F:extracellular matrix binding"/>
    <property type="evidence" value="ECO:0000266"/>
    <property type="project" value="RGD"/>
</dbReference>
<dbReference type="GO" id="GO:0030023">
    <property type="term" value="F:extracellular matrix constituent conferring elasticity"/>
    <property type="evidence" value="ECO:0000315"/>
    <property type="project" value="RGD"/>
</dbReference>
<dbReference type="GO" id="GO:0035904">
    <property type="term" value="P:aorta development"/>
    <property type="evidence" value="ECO:0000270"/>
    <property type="project" value="RGD"/>
</dbReference>
<dbReference type="GO" id="GO:0003180">
    <property type="term" value="P:aortic valve morphogenesis"/>
    <property type="evidence" value="ECO:0000266"/>
    <property type="project" value="RGD"/>
</dbReference>
<dbReference type="GO" id="GO:0001974">
    <property type="term" value="P:blood vessel remodeling"/>
    <property type="evidence" value="ECO:0000314"/>
    <property type="project" value="RGD"/>
</dbReference>
<dbReference type="GO" id="GO:0071280">
    <property type="term" value="P:cellular response to copper ion"/>
    <property type="evidence" value="ECO:0000270"/>
    <property type="project" value="RGD"/>
</dbReference>
<dbReference type="GO" id="GO:0071549">
    <property type="term" value="P:cellular response to dexamethasone stimulus"/>
    <property type="evidence" value="ECO:0000270"/>
    <property type="project" value="RGD"/>
</dbReference>
<dbReference type="GO" id="GO:0044344">
    <property type="term" value="P:cellular response to fibroblast growth factor stimulus"/>
    <property type="evidence" value="ECO:0000270"/>
    <property type="project" value="RGD"/>
</dbReference>
<dbReference type="GO" id="GO:0071456">
    <property type="term" value="P:cellular response to hypoxia"/>
    <property type="evidence" value="ECO:0000270"/>
    <property type="project" value="RGD"/>
</dbReference>
<dbReference type="GO" id="GO:0071298">
    <property type="term" value="P:cellular response to L-ascorbic acid"/>
    <property type="evidence" value="ECO:0000270"/>
    <property type="project" value="RGD"/>
</dbReference>
<dbReference type="GO" id="GO:0071300">
    <property type="term" value="P:cellular response to retinoic acid"/>
    <property type="evidence" value="ECO:0000270"/>
    <property type="project" value="RGD"/>
</dbReference>
<dbReference type="GO" id="GO:0071560">
    <property type="term" value="P:cellular response to transforming growth factor beta stimulus"/>
    <property type="evidence" value="ECO:0000270"/>
    <property type="project" value="RGD"/>
</dbReference>
<dbReference type="GO" id="GO:0048251">
    <property type="term" value="P:elastic fiber assembly"/>
    <property type="evidence" value="ECO:0000304"/>
    <property type="project" value="RGD"/>
</dbReference>
<dbReference type="GO" id="GO:0085029">
    <property type="term" value="P:extracellular matrix assembly"/>
    <property type="evidence" value="ECO:0000266"/>
    <property type="project" value="RGD"/>
</dbReference>
<dbReference type="GO" id="GO:0030198">
    <property type="term" value="P:extracellular matrix organization"/>
    <property type="evidence" value="ECO:0000266"/>
    <property type="project" value="RGD"/>
</dbReference>
<dbReference type="GO" id="GO:0003151">
    <property type="term" value="P:outflow tract morphogenesis"/>
    <property type="evidence" value="ECO:0000266"/>
    <property type="project" value="RGD"/>
</dbReference>
<dbReference type="GO" id="GO:0030833">
    <property type="term" value="P:regulation of actin filament polymerization"/>
    <property type="evidence" value="ECO:0000266"/>
    <property type="project" value="RGD"/>
</dbReference>
<dbReference type="GO" id="GO:0055093">
    <property type="term" value="P:response to hyperoxia"/>
    <property type="evidence" value="ECO:0000270"/>
    <property type="project" value="RGD"/>
</dbReference>
<dbReference type="GO" id="GO:0009410">
    <property type="term" value="P:response to xenobiotic stimulus"/>
    <property type="evidence" value="ECO:0000270"/>
    <property type="project" value="RGD"/>
</dbReference>
<dbReference type="GO" id="GO:0007519">
    <property type="term" value="P:skeletal muscle tissue development"/>
    <property type="evidence" value="ECO:0000266"/>
    <property type="project" value="RGD"/>
</dbReference>
<dbReference type="GO" id="GO:0043149">
    <property type="term" value="P:stress fiber assembly"/>
    <property type="evidence" value="ECO:0000266"/>
    <property type="project" value="RGD"/>
</dbReference>
<dbReference type="InterPro" id="IPR003979">
    <property type="entry name" value="Tropoelastin"/>
</dbReference>
<dbReference type="PANTHER" id="PTHR24018">
    <property type="entry name" value="ELASTIN"/>
    <property type="match status" value="1"/>
</dbReference>
<dbReference type="PANTHER" id="PTHR24018:SF5">
    <property type="entry name" value="ELASTIN"/>
    <property type="match status" value="1"/>
</dbReference>
<dbReference type="PRINTS" id="PR01500">
    <property type="entry name" value="TROPOELASTIN"/>
</dbReference>
<feature type="signal peptide" evidence="6">
    <location>
        <begin position="1"/>
        <end position="27"/>
    </location>
</feature>
<feature type="chain" id="PRO_0000021165" description="Elastin">
    <location>
        <begin position="28"/>
        <end position="870"/>
    </location>
</feature>
<feature type="modified residue" description="4-hydroxyproline" evidence="1">
    <location>
        <position position="39"/>
    </location>
</feature>
<feature type="modified residue" description="4-hydroxyproline" evidence="1">
    <location>
        <position position="75"/>
    </location>
</feature>
<feature type="modified residue" description="Hydroxyproline" evidence="1">
    <location>
        <position position="87"/>
    </location>
</feature>
<feature type="modified residue" description="4-hydroxyproline" evidence="1">
    <location>
        <position position="105"/>
    </location>
</feature>
<feature type="modified residue" description="Allysine" evidence="2">
    <location>
        <position position="122"/>
    </location>
</feature>
<feature type="modified residue" description="Allysine" evidence="2">
    <location>
        <position position="126"/>
    </location>
</feature>
<feature type="modified residue" description="4-hydroxyproline" evidence="1">
    <location>
        <position position="207"/>
    </location>
</feature>
<feature type="modified residue" description="4-hydroxyproline" evidence="1">
    <location>
        <position position="220"/>
    </location>
</feature>
<feature type="modified residue" description="4-hydroxyproline" evidence="1">
    <location>
        <position position="223"/>
    </location>
</feature>
<feature type="modified residue" description="4-hydroxyproline" evidence="1">
    <location>
        <position position="244"/>
    </location>
</feature>
<feature type="modified residue" description="Allysine" evidence="2">
    <location>
        <position position="290"/>
    </location>
</feature>
<feature type="modified residue" description="Allysine" evidence="2">
    <location>
        <position position="309"/>
    </location>
</feature>
<feature type="modified residue" description="4-hydroxyproline" evidence="1">
    <location>
        <position position="338"/>
    </location>
</feature>
<feature type="modified residue" description="Allysine" evidence="2">
    <location>
        <position position="360"/>
    </location>
</feature>
<feature type="modified residue" description="Allysine" evidence="2">
    <location>
        <position position="363"/>
    </location>
</feature>
<feature type="modified residue" description="Hydroxyproline" evidence="1">
    <location>
        <position position="375"/>
    </location>
</feature>
<feature type="modified residue" description="4-hydroxyproline" evidence="1">
    <location>
        <position position="402"/>
    </location>
</feature>
<feature type="modified residue" description="4-hydroxyproline" evidence="1">
    <location>
        <position position="408"/>
    </location>
</feature>
<feature type="modified residue" description="Hydroxyproline" evidence="1">
    <location>
        <position position="413"/>
    </location>
</feature>
<feature type="modified residue" description="Hydroxyproline" evidence="1">
    <location>
        <position position="418"/>
    </location>
</feature>
<feature type="modified residue" description="Allysine" evidence="2">
    <location>
        <position position="434"/>
    </location>
</feature>
<feature type="modified residue" description="Allysine" evidence="2">
    <location>
        <position position="438"/>
    </location>
</feature>
<feature type="modified residue" description="Allysine" evidence="2">
    <location>
        <position position="441"/>
    </location>
</feature>
<feature type="modified residue" description="Allysine" evidence="2">
    <location>
        <position position="485"/>
    </location>
</feature>
<feature type="modified residue" description="Allysine" evidence="2">
    <location>
        <position position="488"/>
    </location>
</feature>
<feature type="modified residue" description="4-hydroxyproline" evidence="1">
    <location>
        <position position="518"/>
    </location>
</feature>
<feature type="modified residue" description="4-hydroxyproline" evidence="1">
    <location>
        <position position="539"/>
    </location>
</feature>
<feature type="modified residue" description="Allysine" evidence="2">
    <location>
        <position position="554"/>
    </location>
</feature>
<feature type="modified residue" description="Allysine" evidence="2">
    <location>
        <position position="558"/>
    </location>
</feature>
<feature type="modified residue" description="Allysine" evidence="2">
    <location>
        <position position="615"/>
    </location>
</feature>
<feature type="modified residue" description="Allysine" evidence="2">
    <location>
        <position position="619"/>
    </location>
</feature>
<feature type="modified residue" description="Allysine" evidence="2">
    <location>
        <position position="623"/>
    </location>
</feature>
<feature type="modified residue" description="4-hydroxyproline" evidence="1">
    <location>
        <position position="637"/>
    </location>
</feature>
<feature type="modified residue" description="4-hydroxyproline" evidence="1">
    <location>
        <position position="646"/>
    </location>
</feature>
<feature type="modified residue" description="4-hydroxyproline" evidence="1">
    <location>
        <position position="662"/>
    </location>
</feature>
<feature type="modified residue" description="4-hydroxyproline" evidence="1">
    <location>
        <position position="670"/>
    </location>
</feature>
<feature type="modified residue" description="Allysine" evidence="2">
    <location>
        <position position="677"/>
    </location>
</feature>
<feature type="modified residue" description="Allysine" evidence="2">
    <location>
        <position position="680"/>
    </location>
</feature>
<feature type="modified residue" description="4-hydroxyproline" evidence="1">
    <location>
        <position position="715"/>
    </location>
</feature>
<feature type="modified residue" description="Allysine" evidence="2">
    <location>
        <position position="730"/>
    </location>
</feature>
<feature type="modified residue" description="Allysine" evidence="2">
    <location>
        <position position="734"/>
    </location>
</feature>
<feature type="modified residue" description="Allysine" evidence="2">
    <location>
        <position position="793"/>
    </location>
</feature>
<feature type="modified residue" description="Allysine" evidence="2">
    <location>
        <position position="796"/>
    </location>
</feature>
<feature type="modified residue" description="4-hydroxyproline" evidence="1">
    <location>
        <position position="842"/>
    </location>
</feature>
<feature type="disulfide bond" evidence="1">
    <location>
        <begin position="860"/>
        <end position="865"/>
    </location>
</feature>
<feature type="splice variant" id="VSP_004244" description="In isoform 2, isoform 5, isoform 7 and isoform 8." evidence="8">
    <location>
        <begin position="269"/>
        <end position="313"/>
    </location>
</feature>
<feature type="splice variant" id="VSP_004245" description="In isoform 3, isoform 5, isoform 6 and isoform 8." evidence="7">
    <location>
        <position position="314"/>
    </location>
</feature>
<feature type="splice variant" id="VSP_004246" description="In isoform 4, isoform 6, isoform 7 and isoform 8." evidence="8">
    <location>
        <begin position="815"/>
        <end position="829"/>
    </location>
</feature>
<feature type="sequence conflict" description="In Ref. 1; AAH85910." evidence="8" ref="1">
    <original>F</original>
    <variation>L</variation>
    <location>
        <position position="705"/>
    </location>
</feature>
<feature type="sequence conflict" description="In Ref. 1; AAH85910." evidence="8" ref="1">
    <original>G</original>
    <variation>GPGGLGG</variation>
    <location>
        <position position="713"/>
    </location>
</feature>
<comment type="function">
    <text evidence="4">Major structural protein of tissues such as aorta and nuchal ligament, which must expand rapidly and recover completely. Molecular determinant of the late arterial morphogenesis, stabilizing arterial structure by regulating proliferation and organization of vascular smooth muscle (By similarity).</text>
</comment>
<comment type="subunit">
    <text evidence="2 3">The polymeric elastin chains are cross-linked together into an extensible 3D network. Forms a ternary complex with BGN and MFAP2. Interacts with MFAP2 via divalent cations (calcium &gt; magnesium &gt; manganese) in a dose-dependent and saturating manner. Interacts with FBLN5 and FBN1. Forms a ternary complex with FBN1 and FBLN2 or FBLN5. Interacts with MFAP4 in a Ca (2+)-dependent manner; this interaction promotes ELN self-assembly (By similarity). Interacts with EFEMP2 with moderate affinity (By similarity).</text>
</comment>
<comment type="subcellular location">
    <subcellularLocation>
        <location evidence="3">Secreted</location>
        <location evidence="3">Extracellular space</location>
        <location evidence="3">Extracellular matrix</location>
    </subcellularLocation>
    <text evidence="3">Extracellular matrix of elastic fibers.</text>
</comment>
<comment type="alternative products">
    <event type="alternative splicing"/>
    <isoform>
        <id>Q99372-1</id>
        <name>1</name>
        <sequence type="displayed"/>
    </isoform>
    <isoform>
        <id>Q99372-2</id>
        <name>2</name>
        <sequence type="described" ref="VSP_004244"/>
    </isoform>
    <isoform>
        <id>Q99372-3</id>
        <name>3</name>
        <sequence type="described" ref="VSP_004245"/>
    </isoform>
    <isoform>
        <id>Q99372-4</id>
        <name>4</name>
        <sequence type="described" ref="VSP_004246"/>
    </isoform>
    <isoform>
        <id>Q99372-5</id>
        <name>5</name>
        <sequence type="described" ref="VSP_004244 VSP_004245"/>
    </isoform>
    <isoform>
        <id>Q99372-6</id>
        <name>6</name>
        <sequence type="described" ref="VSP_004245 VSP_004246"/>
    </isoform>
    <isoform>
        <id>Q99372-7</id>
        <name>7</name>
        <sequence type="described" ref="VSP_004244 VSP_004246"/>
    </isoform>
    <isoform>
        <id>Q99372-8</id>
        <name>8</name>
        <sequence type="described" ref="VSP_004244 VSP_004245 VSP_004246"/>
    </isoform>
    <text>Experimental confirmation may be lacking for some isoforms.</text>
</comment>
<comment type="induction">
    <text evidence="5">Down-regulated by DTR via activation of EGFR.</text>
</comment>
<comment type="PTM">
    <text>Elastin is formed through the cross-linking of its soluble precursor tropoelastin. Cross-linking is initiated through the action of lysyl oxidase on exposed lysines to form allysine. Subsequent spontaneous condensation reactions with other allysine or unmodified lysine residues result in various bi-, tri-, and tetrafunctional cross-links. The most abundant cross-links in mature elastin fibers are lysinonorleucine, allysine aldol, desmosine, and isodesmosine.</text>
</comment>
<comment type="PTM">
    <text evidence="1">Hydroxylation on proline residues within the sequence motif, GXPG, is most likely to be 4-hydroxy as this fits the requirement for 4-hydroxylation in vertebrates.</text>
</comment>
<comment type="similarity">
    <text evidence="8">Belongs to the elastin family.</text>
</comment>
<name>ELN_RAT</name>
<organism>
    <name type="scientific">Rattus norvegicus</name>
    <name type="common">Rat</name>
    <dbReference type="NCBI Taxonomy" id="10116"/>
    <lineage>
        <taxon>Eukaryota</taxon>
        <taxon>Metazoa</taxon>
        <taxon>Chordata</taxon>
        <taxon>Craniata</taxon>
        <taxon>Vertebrata</taxon>
        <taxon>Euteleostomi</taxon>
        <taxon>Mammalia</taxon>
        <taxon>Eutheria</taxon>
        <taxon>Euarchontoglires</taxon>
        <taxon>Glires</taxon>
        <taxon>Rodentia</taxon>
        <taxon>Myomorpha</taxon>
        <taxon>Muroidea</taxon>
        <taxon>Muridae</taxon>
        <taxon>Murinae</taxon>
        <taxon>Rattus</taxon>
    </lineage>
</organism>
<proteinExistence type="evidence at protein level"/>
<accession>Q99372</accession>
<accession>Q5RKH4</accession>
<reference key="1">
    <citation type="journal article" date="2004" name="Genome Res.">
        <title>The status, quality, and expansion of the NIH full-length cDNA project: the Mammalian Gene Collection (MGC).</title>
        <authorList>
            <consortium name="The MGC Project Team"/>
        </authorList>
    </citation>
    <scope>NUCLEOTIDE SEQUENCE [LARGE SCALE MRNA] (ISOFORM 3)</scope>
    <source>
        <tissue>Lung</tissue>
    </source>
</reference>
<reference key="2">
    <citation type="journal article" date="1990" name="Biochemistry">
        <title>Heterogeneity of rat tropoelastin mRNA revealed by cDNA cloning.</title>
        <authorList>
            <person name="Pierce R.A."/>
            <person name="Deak S.B."/>
            <person name="Stolle C.A."/>
            <person name="Boyd C.D."/>
        </authorList>
    </citation>
    <scope>NUCLEOTIDE SEQUENCE [MRNA] OF 7-870 (ISOFORM 1)</scope>
    <scope>ALTERNATIVE SPLICING</scope>
    <source>
        <tissue>Aorta</tissue>
    </source>
</reference>
<reference key="3">
    <citation type="journal article" date="1989" name="Arch. Biochem. Biophys.">
        <title>Characterization of rat heart tropoelastin.</title>
        <authorList>
            <person name="Rich C.B."/>
            <person name="Foster J.A."/>
        </authorList>
    </citation>
    <scope>PARTIAL NUCLEOTIDE SEQUENCE [MRNA]</scope>
</reference>
<reference key="4">
    <citation type="journal article" date="1989" name="J. Biol. Chem.">
        <title>Role of tropoelastin fragmentation in elastogenesis in rat smooth muscle cells.</title>
        <authorList>
            <person name="Franzblau C."/>
            <person name="Pratt C.A."/>
            <person name="Faris B."/>
            <person name="Colannino N.M."/>
            <person name="Offner G.D."/>
            <person name="Mogayzel P.J. Jr."/>
            <person name="Troxler R.F."/>
        </authorList>
    </citation>
    <scope>PROTEIN SEQUENCE OF 28-37</scope>
</reference>
<reference key="5">
    <citation type="journal article" date="1992" name="Genomics">
        <title>Elements of the rat tropoelastin gene associated with alternative splicing.</title>
        <authorList>
            <person name="Pierce R.A."/>
            <person name="Alatawi A."/>
            <person name="Deak S.B."/>
            <person name="Boyd C.D."/>
        </authorList>
    </citation>
    <scope>NUCLEOTIDE SEQUENCE [GENOMIC DNA] OF 270-539 AND 564-870</scope>
    <scope>ALTERNATIVE SPLICING</scope>
    <source>
        <strain>Sprague-Dawley</strain>
        <tissue>Liver</tissue>
    </source>
</reference>
<reference key="6">
    <citation type="journal article" date="1988" name="J. Biol. Chem.">
        <title>Rat tropoelastin is synthesized from a 3.5-kilobase mRNA.</title>
        <authorList>
            <person name="Deak S.B."/>
            <person name="Pierce R.A."/>
            <person name="Belsky S.A."/>
            <person name="Riley D.J."/>
            <person name="Boyd C.D."/>
        </authorList>
    </citation>
    <scope>NUCLEOTIDE SEQUENCE [MRNA] OF 787-870</scope>
</reference>
<reference key="7">
    <citation type="journal article" date="2003" name="Am. J. Physiol.">
        <title>Heparin-binding EGF-like growth factor regulates elastin and FGF-2 expression in pulmonary fibroblasts.</title>
        <authorList>
            <person name="Liu J."/>
            <person name="Rich C.B."/>
            <person name="Buczek-Thomas J.A."/>
            <person name="Nugent M.A."/>
            <person name="Panchenko M.P."/>
            <person name="Foster J.A."/>
        </authorList>
    </citation>
    <scope>INDUCTION</scope>
</reference>
<reference key="8">
    <citation type="journal article" date="2015" name="J. Proteome Res.">
        <title>Peptidomics for studying limited proteolysis.</title>
        <authorList>
            <person name="Tsuchiya T."/>
            <person name="Osaki T."/>
            <person name="Minamino N."/>
            <person name="Sasaki K."/>
        </authorList>
    </citation>
    <scope>CLEAVAGE OF SIGNAL PEPTIDE AFTER PRO-27</scope>
    <scope>IDENTIFICATION BY MASS SPECTROMETRY</scope>
</reference>
<keyword id="KW-0025">Alternative splicing</keyword>
<keyword id="KW-0903">Direct protein sequencing</keyword>
<keyword id="KW-1015">Disulfide bond</keyword>
<keyword id="KW-0272">Extracellular matrix</keyword>
<keyword id="KW-0379">Hydroxylation</keyword>
<keyword id="KW-1185">Reference proteome</keyword>
<keyword id="KW-0677">Repeat</keyword>
<keyword id="KW-0964">Secreted</keyword>
<keyword id="KW-0732">Signal</keyword>